<feature type="chain" id="PRO_1000054247" description="Multifunctional CCA protein">
    <location>
        <begin position="1"/>
        <end position="413"/>
    </location>
</feature>
<feature type="domain" description="HD" evidence="1">
    <location>
        <begin position="228"/>
        <end position="329"/>
    </location>
</feature>
<feature type="binding site" evidence="1">
    <location>
        <position position="8"/>
    </location>
    <ligand>
        <name>ATP</name>
        <dbReference type="ChEBI" id="CHEBI:30616"/>
    </ligand>
</feature>
<feature type="binding site" evidence="1">
    <location>
        <position position="8"/>
    </location>
    <ligand>
        <name>CTP</name>
        <dbReference type="ChEBI" id="CHEBI:37563"/>
    </ligand>
</feature>
<feature type="binding site" evidence="1">
    <location>
        <position position="11"/>
    </location>
    <ligand>
        <name>ATP</name>
        <dbReference type="ChEBI" id="CHEBI:30616"/>
    </ligand>
</feature>
<feature type="binding site" evidence="1">
    <location>
        <position position="11"/>
    </location>
    <ligand>
        <name>CTP</name>
        <dbReference type="ChEBI" id="CHEBI:37563"/>
    </ligand>
</feature>
<feature type="binding site" evidence="1">
    <location>
        <position position="21"/>
    </location>
    <ligand>
        <name>Mg(2+)</name>
        <dbReference type="ChEBI" id="CHEBI:18420"/>
    </ligand>
</feature>
<feature type="binding site" evidence="1">
    <location>
        <position position="23"/>
    </location>
    <ligand>
        <name>Mg(2+)</name>
        <dbReference type="ChEBI" id="CHEBI:18420"/>
    </ligand>
</feature>
<feature type="binding site" evidence="1">
    <location>
        <position position="91"/>
    </location>
    <ligand>
        <name>ATP</name>
        <dbReference type="ChEBI" id="CHEBI:30616"/>
    </ligand>
</feature>
<feature type="binding site" evidence="1">
    <location>
        <position position="91"/>
    </location>
    <ligand>
        <name>CTP</name>
        <dbReference type="ChEBI" id="CHEBI:37563"/>
    </ligand>
</feature>
<feature type="binding site" evidence="1">
    <location>
        <position position="137"/>
    </location>
    <ligand>
        <name>ATP</name>
        <dbReference type="ChEBI" id="CHEBI:30616"/>
    </ligand>
</feature>
<feature type="binding site" evidence="1">
    <location>
        <position position="137"/>
    </location>
    <ligand>
        <name>CTP</name>
        <dbReference type="ChEBI" id="CHEBI:37563"/>
    </ligand>
</feature>
<feature type="binding site" evidence="1">
    <location>
        <position position="140"/>
    </location>
    <ligand>
        <name>ATP</name>
        <dbReference type="ChEBI" id="CHEBI:30616"/>
    </ligand>
</feature>
<feature type="binding site" evidence="1">
    <location>
        <position position="140"/>
    </location>
    <ligand>
        <name>CTP</name>
        <dbReference type="ChEBI" id="CHEBI:37563"/>
    </ligand>
</feature>
<protein>
    <recommendedName>
        <fullName evidence="1">Multifunctional CCA protein</fullName>
    </recommendedName>
    <domain>
        <recommendedName>
            <fullName evidence="1">CCA-adding enzyme</fullName>
            <ecNumber evidence="1">2.7.7.72</ecNumber>
        </recommendedName>
        <alternativeName>
            <fullName evidence="1">CCA tRNA nucleotidyltransferase</fullName>
        </alternativeName>
        <alternativeName>
            <fullName evidence="1">tRNA CCA-pyrophosphorylase</fullName>
        </alternativeName>
        <alternativeName>
            <fullName evidence="1">tRNA adenylyl-/cytidylyl-transferase</fullName>
        </alternativeName>
        <alternativeName>
            <fullName evidence="1">tRNA nucleotidyltransferase</fullName>
        </alternativeName>
        <alternativeName>
            <fullName evidence="1">tRNA-NT</fullName>
        </alternativeName>
    </domain>
    <domain>
        <recommendedName>
            <fullName evidence="1">2'-nucleotidase</fullName>
            <ecNumber evidence="1">3.1.3.-</ecNumber>
        </recommendedName>
    </domain>
    <domain>
        <recommendedName>
            <fullName evidence="1">2',3'-cyclic phosphodiesterase</fullName>
            <ecNumber evidence="1">3.1.4.-</ecNumber>
        </recommendedName>
    </domain>
    <domain>
        <recommendedName>
            <fullName evidence="1">Phosphatase</fullName>
            <ecNumber evidence="1">3.1.3.-</ecNumber>
        </recommendedName>
    </domain>
</protein>
<proteinExistence type="inferred from homology"/>
<sequence>MKVYLVGGAVRDQLLGREVRERDWVVVGARPEDLKQRGYRPVGQDFPVFLHPETHEEYALARTERKTGRGYHGFAFHASPEVTLEQDLARRDLTINAMARADDGTLIDPYDGRRDLEQRLLRHVSPAFAEDPVRILRLARFAARFQPLGFRVAPETLALCRKMVADGEVDALVPERVWQELSRALLEDTPVPFFRVLRECGALARVLPELDRLFGIPEPEAYHPEGDTGEHTLLALAQSARLGGDLPVRWAVLLHDLGKATTPSQVWPRHPAHEHRGVPLVEALCERLRAPRECRDLARLVCRYHLQAHRAFELRASTLLKLLEGLDLFRRQARLEPFLLACEADARGRLGLEDQPYPQARFLREAYRVAAAVTARPFVQAGFKGRQIAEAVTRERIRALAALQRDYPRPEAH</sequence>
<name>CCA_ALKEH</name>
<accession>Q0ACP8</accession>
<organism>
    <name type="scientific">Alkalilimnicola ehrlichii (strain ATCC BAA-1101 / DSM 17681 / MLHE-1)</name>
    <dbReference type="NCBI Taxonomy" id="187272"/>
    <lineage>
        <taxon>Bacteria</taxon>
        <taxon>Pseudomonadati</taxon>
        <taxon>Pseudomonadota</taxon>
        <taxon>Gammaproteobacteria</taxon>
        <taxon>Chromatiales</taxon>
        <taxon>Ectothiorhodospiraceae</taxon>
        <taxon>Alkalilimnicola</taxon>
    </lineage>
</organism>
<comment type="function">
    <text evidence="1">Catalyzes the addition and repair of the essential 3'-terminal CCA sequence in tRNAs without using a nucleic acid template. Adds these three nucleotides in the order of C, C, and A to the tRNA nucleotide-73, using CTP and ATP as substrates and producing inorganic pyrophosphate. tRNA 3'-terminal CCA addition is required both for tRNA processing and repair. Also involved in tRNA surveillance by mediating tandem CCA addition to generate a CCACCA at the 3' terminus of unstable tRNAs. While stable tRNAs receive only 3'-terminal CCA, unstable tRNAs are marked with CCACCA and rapidly degraded.</text>
</comment>
<comment type="catalytic activity">
    <reaction evidence="1">
        <text>a tRNA precursor + 2 CTP + ATP = a tRNA with a 3' CCA end + 3 diphosphate</text>
        <dbReference type="Rhea" id="RHEA:14433"/>
        <dbReference type="Rhea" id="RHEA-COMP:10465"/>
        <dbReference type="Rhea" id="RHEA-COMP:10468"/>
        <dbReference type="ChEBI" id="CHEBI:30616"/>
        <dbReference type="ChEBI" id="CHEBI:33019"/>
        <dbReference type="ChEBI" id="CHEBI:37563"/>
        <dbReference type="ChEBI" id="CHEBI:74896"/>
        <dbReference type="ChEBI" id="CHEBI:83071"/>
        <dbReference type="EC" id="2.7.7.72"/>
    </reaction>
</comment>
<comment type="catalytic activity">
    <reaction evidence="1">
        <text>a tRNA with a 3' CCA end + 2 CTP + ATP = a tRNA with a 3' CCACCA end + 3 diphosphate</text>
        <dbReference type="Rhea" id="RHEA:76235"/>
        <dbReference type="Rhea" id="RHEA-COMP:10468"/>
        <dbReference type="Rhea" id="RHEA-COMP:18655"/>
        <dbReference type="ChEBI" id="CHEBI:30616"/>
        <dbReference type="ChEBI" id="CHEBI:33019"/>
        <dbReference type="ChEBI" id="CHEBI:37563"/>
        <dbReference type="ChEBI" id="CHEBI:83071"/>
        <dbReference type="ChEBI" id="CHEBI:195187"/>
    </reaction>
    <physiologicalReaction direction="left-to-right" evidence="1">
        <dbReference type="Rhea" id="RHEA:76236"/>
    </physiologicalReaction>
</comment>
<comment type="cofactor">
    <cofactor evidence="1">
        <name>Mg(2+)</name>
        <dbReference type="ChEBI" id="CHEBI:18420"/>
    </cofactor>
    <text evidence="1">Magnesium is required for nucleotidyltransferase activity.</text>
</comment>
<comment type="cofactor">
    <cofactor evidence="1">
        <name>Ni(2+)</name>
        <dbReference type="ChEBI" id="CHEBI:49786"/>
    </cofactor>
    <text evidence="1">Nickel for phosphatase activity.</text>
</comment>
<comment type="subunit">
    <text evidence="1">Monomer. Can also form homodimers and oligomers.</text>
</comment>
<comment type="domain">
    <text evidence="1">Comprises two domains: an N-terminal domain containing the nucleotidyltransferase activity and a C-terminal HD domain associated with both phosphodiesterase and phosphatase activities.</text>
</comment>
<comment type="miscellaneous">
    <text evidence="1">A single active site specifically recognizes both ATP and CTP and is responsible for their addition.</text>
</comment>
<comment type="similarity">
    <text evidence="1">Belongs to the tRNA nucleotidyltransferase/poly(A) polymerase family. Bacterial CCA-adding enzyme type 1 subfamily.</text>
</comment>
<dbReference type="EC" id="2.7.7.72" evidence="1"/>
<dbReference type="EC" id="3.1.3.-" evidence="1"/>
<dbReference type="EC" id="3.1.4.-" evidence="1"/>
<dbReference type="EMBL" id="CP000453">
    <property type="protein sequence ID" value="ABI55389.1"/>
    <property type="molecule type" value="Genomic_DNA"/>
</dbReference>
<dbReference type="RefSeq" id="WP_011627785.1">
    <property type="nucleotide sequence ID" value="NC_008340.1"/>
</dbReference>
<dbReference type="SMR" id="Q0ACP8"/>
<dbReference type="KEGG" id="aeh:Mlg_0030"/>
<dbReference type="eggNOG" id="COG0617">
    <property type="taxonomic scope" value="Bacteria"/>
</dbReference>
<dbReference type="HOGENOM" id="CLU_015961_1_1_6"/>
<dbReference type="OrthoDB" id="9805698at2"/>
<dbReference type="Proteomes" id="UP000001962">
    <property type="component" value="Chromosome"/>
</dbReference>
<dbReference type="GO" id="GO:0005524">
    <property type="term" value="F:ATP binding"/>
    <property type="evidence" value="ECO:0007669"/>
    <property type="project" value="UniProtKB-UniRule"/>
</dbReference>
<dbReference type="GO" id="GO:0004810">
    <property type="term" value="F:CCA tRNA nucleotidyltransferase activity"/>
    <property type="evidence" value="ECO:0007669"/>
    <property type="project" value="UniProtKB-UniRule"/>
</dbReference>
<dbReference type="GO" id="GO:0004112">
    <property type="term" value="F:cyclic-nucleotide phosphodiesterase activity"/>
    <property type="evidence" value="ECO:0007669"/>
    <property type="project" value="UniProtKB-UniRule"/>
</dbReference>
<dbReference type="GO" id="GO:0000287">
    <property type="term" value="F:magnesium ion binding"/>
    <property type="evidence" value="ECO:0007669"/>
    <property type="project" value="UniProtKB-UniRule"/>
</dbReference>
<dbReference type="GO" id="GO:0016791">
    <property type="term" value="F:phosphatase activity"/>
    <property type="evidence" value="ECO:0007669"/>
    <property type="project" value="UniProtKB-UniRule"/>
</dbReference>
<dbReference type="GO" id="GO:0000049">
    <property type="term" value="F:tRNA binding"/>
    <property type="evidence" value="ECO:0007669"/>
    <property type="project" value="UniProtKB-UniRule"/>
</dbReference>
<dbReference type="GO" id="GO:0042245">
    <property type="term" value="P:RNA repair"/>
    <property type="evidence" value="ECO:0007669"/>
    <property type="project" value="UniProtKB-KW"/>
</dbReference>
<dbReference type="GO" id="GO:0001680">
    <property type="term" value="P:tRNA 3'-terminal CCA addition"/>
    <property type="evidence" value="ECO:0007669"/>
    <property type="project" value="UniProtKB-UniRule"/>
</dbReference>
<dbReference type="CDD" id="cd00077">
    <property type="entry name" value="HDc"/>
    <property type="match status" value="1"/>
</dbReference>
<dbReference type="CDD" id="cd05398">
    <property type="entry name" value="NT_ClassII-CCAase"/>
    <property type="match status" value="1"/>
</dbReference>
<dbReference type="Gene3D" id="3.30.460.10">
    <property type="entry name" value="Beta Polymerase, domain 2"/>
    <property type="match status" value="1"/>
</dbReference>
<dbReference type="Gene3D" id="1.10.3090.10">
    <property type="entry name" value="cca-adding enzyme, domain 2"/>
    <property type="match status" value="1"/>
</dbReference>
<dbReference type="HAMAP" id="MF_01261">
    <property type="entry name" value="CCA_bact_type1"/>
    <property type="match status" value="1"/>
</dbReference>
<dbReference type="HAMAP" id="MF_01262">
    <property type="entry name" value="CCA_bact_type2"/>
    <property type="match status" value="1"/>
</dbReference>
<dbReference type="InterPro" id="IPR012006">
    <property type="entry name" value="CCA_bact"/>
</dbReference>
<dbReference type="InterPro" id="IPR003607">
    <property type="entry name" value="HD/PDEase_dom"/>
</dbReference>
<dbReference type="InterPro" id="IPR006674">
    <property type="entry name" value="HD_domain"/>
</dbReference>
<dbReference type="InterPro" id="IPR043519">
    <property type="entry name" value="NT_sf"/>
</dbReference>
<dbReference type="InterPro" id="IPR002646">
    <property type="entry name" value="PolA_pol_head_dom"/>
</dbReference>
<dbReference type="InterPro" id="IPR032828">
    <property type="entry name" value="PolyA_RNA-bd"/>
</dbReference>
<dbReference type="InterPro" id="IPR050124">
    <property type="entry name" value="tRNA_CCA-adding_enzyme"/>
</dbReference>
<dbReference type="NCBIfam" id="NF008137">
    <property type="entry name" value="PRK10885.1"/>
    <property type="match status" value="1"/>
</dbReference>
<dbReference type="PANTHER" id="PTHR47545">
    <property type="entry name" value="MULTIFUNCTIONAL CCA PROTEIN"/>
    <property type="match status" value="1"/>
</dbReference>
<dbReference type="PANTHER" id="PTHR47545:SF1">
    <property type="entry name" value="MULTIFUNCTIONAL CCA PROTEIN"/>
    <property type="match status" value="1"/>
</dbReference>
<dbReference type="Pfam" id="PF01966">
    <property type="entry name" value="HD"/>
    <property type="match status" value="1"/>
</dbReference>
<dbReference type="Pfam" id="PF01743">
    <property type="entry name" value="PolyA_pol"/>
    <property type="match status" value="1"/>
</dbReference>
<dbReference type="Pfam" id="PF12627">
    <property type="entry name" value="PolyA_pol_RNAbd"/>
    <property type="match status" value="1"/>
</dbReference>
<dbReference type="PIRSF" id="PIRSF000813">
    <property type="entry name" value="CCA_bact"/>
    <property type="match status" value="1"/>
</dbReference>
<dbReference type="SUPFAM" id="SSF81301">
    <property type="entry name" value="Nucleotidyltransferase"/>
    <property type="match status" value="1"/>
</dbReference>
<dbReference type="SUPFAM" id="SSF81891">
    <property type="entry name" value="Poly A polymerase C-terminal region-like"/>
    <property type="match status" value="1"/>
</dbReference>
<dbReference type="PROSITE" id="PS51831">
    <property type="entry name" value="HD"/>
    <property type="match status" value="1"/>
</dbReference>
<keyword id="KW-0067">ATP-binding</keyword>
<keyword id="KW-0378">Hydrolase</keyword>
<keyword id="KW-0460">Magnesium</keyword>
<keyword id="KW-0479">Metal-binding</keyword>
<keyword id="KW-0511">Multifunctional enzyme</keyword>
<keyword id="KW-0533">Nickel</keyword>
<keyword id="KW-0547">Nucleotide-binding</keyword>
<keyword id="KW-0548">Nucleotidyltransferase</keyword>
<keyword id="KW-1185">Reference proteome</keyword>
<keyword id="KW-0692">RNA repair</keyword>
<keyword id="KW-0694">RNA-binding</keyword>
<keyword id="KW-0808">Transferase</keyword>
<keyword id="KW-0819">tRNA processing</keyword>
<evidence type="ECO:0000255" key="1">
    <source>
        <dbReference type="HAMAP-Rule" id="MF_01261"/>
    </source>
</evidence>
<gene>
    <name evidence="1" type="primary">cca</name>
    <name type="ordered locus">Mlg_0030</name>
</gene>
<reference key="1">
    <citation type="submission" date="2006-08" db="EMBL/GenBank/DDBJ databases">
        <title>Complete sequence of Alkalilimnicola ehrilichei MLHE-1.</title>
        <authorList>
            <person name="Copeland A."/>
            <person name="Lucas S."/>
            <person name="Lapidus A."/>
            <person name="Barry K."/>
            <person name="Detter J.C."/>
            <person name="Glavina del Rio T."/>
            <person name="Hammon N."/>
            <person name="Israni S."/>
            <person name="Dalin E."/>
            <person name="Tice H."/>
            <person name="Pitluck S."/>
            <person name="Sims D."/>
            <person name="Brettin T."/>
            <person name="Bruce D."/>
            <person name="Han C."/>
            <person name="Tapia R."/>
            <person name="Gilna P."/>
            <person name="Schmutz J."/>
            <person name="Larimer F."/>
            <person name="Land M."/>
            <person name="Hauser L."/>
            <person name="Kyrpides N."/>
            <person name="Mikhailova N."/>
            <person name="Oremland R.S."/>
            <person name="Hoeft S.E."/>
            <person name="Switzer-Blum J."/>
            <person name="Kulp T."/>
            <person name="King G."/>
            <person name="Tabita R."/>
            <person name="Witte B."/>
            <person name="Santini J.M."/>
            <person name="Basu P."/>
            <person name="Hollibaugh J.T."/>
            <person name="Xie G."/>
            <person name="Stolz J.F."/>
            <person name="Richardson P."/>
        </authorList>
    </citation>
    <scope>NUCLEOTIDE SEQUENCE [LARGE SCALE GENOMIC DNA]</scope>
    <source>
        <strain>ATCC BAA-1101 / DSM 17681 / MLHE-1</strain>
    </source>
</reference>